<evidence type="ECO:0000250" key="1">
    <source>
        <dbReference type="UniProtKB" id="P26297"/>
    </source>
</evidence>
<evidence type="ECO:0000269" key="2">
    <source>
    </source>
</evidence>
<evidence type="ECO:0000269" key="3">
    <source ref="3"/>
</evidence>
<evidence type="ECO:0000305" key="4"/>
<evidence type="ECO:0000305" key="5">
    <source ref="3"/>
</evidence>
<evidence type="ECO:0007829" key="6">
    <source>
        <dbReference type="PDB" id="2DLD"/>
    </source>
</evidence>
<protein>
    <recommendedName>
        <fullName>D-lactate dehydrogenase</fullName>
        <shortName>D-LDH</shortName>
        <ecNumber>1.1.1.28</ecNumber>
    </recommendedName>
    <alternativeName>
        <fullName>D-specific 2-hydroxyacid dehydrogenase</fullName>
    </alternativeName>
</protein>
<keyword id="KW-0002">3D-structure</keyword>
<keyword id="KW-0903">Direct protein sequencing</keyword>
<keyword id="KW-0520">NAD</keyword>
<keyword id="KW-0560">Oxidoreductase</keyword>
<organism>
    <name type="scientific">Lactobacillus helveticus</name>
    <name type="common">Lactobacillus suntoryeus</name>
    <dbReference type="NCBI Taxonomy" id="1587"/>
    <lineage>
        <taxon>Bacteria</taxon>
        <taxon>Bacillati</taxon>
        <taxon>Bacillota</taxon>
        <taxon>Bacilli</taxon>
        <taxon>Lactobacillales</taxon>
        <taxon>Lactobacillaceae</taxon>
        <taxon>Lactobacillus</taxon>
    </lineage>
</organism>
<comment type="catalytic activity">
    <reaction>
        <text>(R)-lactate + NAD(+) = pyruvate + NADH + H(+)</text>
        <dbReference type="Rhea" id="RHEA:16369"/>
        <dbReference type="ChEBI" id="CHEBI:15361"/>
        <dbReference type="ChEBI" id="CHEBI:15378"/>
        <dbReference type="ChEBI" id="CHEBI:16004"/>
        <dbReference type="ChEBI" id="CHEBI:57540"/>
        <dbReference type="ChEBI" id="CHEBI:57945"/>
        <dbReference type="EC" id="1.1.1.28"/>
    </reaction>
</comment>
<comment type="subunit">
    <text>Homodimer.</text>
</comment>
<comment type="similarity">
    <text evidence="4">Belongs to the D-isomer specific 2-hydroxyacid dehydrogenase family.</text>
</comment>
<accession>P30901</accession>
<dbReference type="EC" id="1.1.1.28"/>
<dbReference type="EMBL" id="X66723">
    <property type="protein sequence ID" value="CAA47255.1"/>
    <property type="molecule type" value="Genomic_DNA"/>
</dbReference>
<dbReference type="EMBL" id="U07604">
    <property type="protein sequence ID" value="AAA20464.1"/>
    <property type="molecule type" value="Genomic_DNA"/>
</dbReference>
<dbReference type="PIR" id="S29296">
    <property type="entry name" value="S29296"/>
</dbReference>
<dbReference type="RefSeq" id="WP_003628108.1">
    <property type="nucleotide sequence ID" value="NZ_WCGD01000045.1"/>
</dbReference>
<dbReference type="PDB" id="2DLD">
    <property type="method" value="X-ray"/>
    <property type="resolution" value="2.70 A"/>
    <property type="chains" value="A/B=1-337"/>
</dbReference>
<dbReference type="PDBsum" id="2DLD"/>
<dbReference type="SMR" id="P30901"/>
<dbReference type="DrugBank" id="DB03940">
    <property type="generic name" value="Oxamic Acid"/>
</dbReference>
<dbReference type="eggNOG" id="COG1052">
    <property type="taxonomic scope" value="Bacteria"/>
</dbReference>
<dbReference type="BRENDA" id="1.1.1.28">
    <property type="organism ID" value="2870"/>
</dbReference>
<dbReference type="SABIO-RK" id="P30901"/>
<dbReference type="EvolutionaryTrace" id="P30901"/>
<dbReference type="GO" id="GO:0008720">
    <property type="term" value="F:D-lactate dehydrogenase activity"/>
    <property type="evidence" value="ECO:0007669"/>
    <property type="project" value="UniProtKB-EC"/>
</dbReference>
<dbReference type="GO" id="GO:0051287">
    <property type="term" value="F:NAD binding"/>
    <property type="evidence" value="ECO:0007669"/>
    <property type="project" value="InterPro"/>
</dbReference>
<dbReference type="CDD" id="cd12186">
    <property type="entry name" value="LDH"/>
    <property type="match status" value="1"/>
</dbReference>
<dbReference type="Gene3D" id="3.40.50.720">
    <property type="entry name" value="NAD(P)-binding Rossmann-like Domain"/>
    <property type="match status" value="2"/>
</dbReference>
<dbReference type="InterPro" id="IPR006139">
    <property type="entry name" value="D-isomer_2_OHA_DH_cat_dom"/>
</dbReference>
<dbReference type="InterPro" id="IPR029753">
    <property type="entry name" value="D-isomer_DH_CS"/>
</dbReference>
<dbReference type="InterPro" id="IPR029752">
    <property type="entry name" value="D-isomer_DH_CS1"/>
</dbReference>
<dbReference type="InterPro" id="IPR006140">
    <property type="entry name" value="D-isomer_DH_NAD-bd"/>
</dbReference>
<dbReference type="InterPro" id="IPR036291">
    <property type="entry name" value="NAD(P)-bd_dom_sf"/>
</dbReference>
<dbReference type="PANTHER" id="PTHR43026">
    <property type="entry name" value="2-HYDROXYACID DEHYDROGENASE HOMOLOG 1-RELATED"/>
    <property type="match status" value="1"/>
</dbReference>
<dbReference type="PANTHER" id="PTHR43026:SF1">
    <property type="entry name" value="2-HYDROXYACID DEHYDROGENASE HOMOLOG 1-RELATED"/>
    <property type="match status" value="1"/>
</dbReference>
<dbReference type="Pfam" id="PF00389">
    <property type="entry name" value="2-Hacid_dh"/>
    <property type="match status" value="1"/>
</dbReference>
<dbReference type="Pfam" id="PF02826">
    <property type="entry name" value="2-Hacid_dh_C"/>
    <property type="match status" value="1"/>
</dbReference>
<dbReference type="SUPFAM" id="SSF52283">
    <property type="entry name" value="Formate/glycerate dehydrogenase catalytic domain-like"/>
    <property type="match status" value="1"/>
</dbReference>
<dbReference type="SUPFAM" id="SSF51735">
    <property type="entry name" value="NAD(P)-binding Rossmann-fold domains"/>
    <property type="match status" value="1"/>
</dbReference>
<dbReference type="PROSITE" id="PS00065">
    <property type="entry name" value="D_2_HYDROXYACID_DH_1"/>
    <property type="match status" value="1"/>
</dbReference>
<dbReference type="PROSITE" id="PS00670">
    <property type="entry name" value="D_2_HYDROXYACID_DH_2"/>
    <property type="match status" value="1"/>
</dbReference>
<dbReference type="PROSITE" id="PS00671">
    <property type="entry name" value="D_2_HYDROXYACID_DH_3"/>
    <property type="match status" value="1"/>
</dbReference>
<proteinExistence type="evidence at protein level"/>
<reference key="1">
    <citation type="journal article" date="1992" name="Eur. J. Biochem.">
        <title>Cloning and overexpression of Lactobacillus helveticus D-lactate dehydrogenase gene in Escherichia coli.</title>
        <authorList>
            <person name="Kochhar S."/>
            <person name="Hottinger H."/>
            <person name="Chuard N."/>
            <person name="Taylor P.G."/>
            <person name="Atkinson T."/>
            <person name="Scawen M.D."/>
            <person name="Nicholls D.J."/>
        </authorList>
    </citation>
    <scope>NUCLEOTIDE SEQUENCE [GENOMIC DNA]</scope>
    <scope>PROTEIN SEQUENCE OF 2-36</scope>
    <source>
        <strain>ATCC 15009 / DSM 20075 / BCRC 12936 / JCM 1120 / NBRC 15019 / NCIMB 11971 / NRRL B-4526 / Lh12</strain>
    </source>
</reference>
<reference key="2">
    <citation type="journal article" date="1994" name="Appl. Microbiol. Biotechnol.">
        <title>Cloning, characterization and insertional inactivation of the Lactobacillus helveticus D(-) lactate dehydrogenase gene.</title>
        <authorList>
            <person name="Bhowmik T.K."/>
            <person name="Steele J.L."/>
        </authorList>
    </citation>
    <scope>NUCLEOTIDE SEQUENCE [GENOMIC DNA]</scope>
    <source>
        <strain>CNRZ 32</strain>
    </source>
</reference>
<reference key="3">
    <citation type="submission" date="1995-10" db="PDB data bank">
        <authorList>
            <person name="Bernard N."/>
            <person name="Delcour J."/>
            <person name="Alvarez A."/>
            <person name="Cortes A."/>
            <person name="Willis C."/>
            <person name="Holbrook J.J."/>
        </authorList>
    </citation>
    <scope>X-RAY CRYSTALLOGRAPHY (2.7 ANGSTROMS)</scope>
</reference>
<sequence>MTKVFAYAIRKDEEPFLNEWKEAHKDIDVDYTDKLLTPETAKLAKGADGVVVYQQLDYTADTLQALADAGVTKMSLRNVGVDNIDMDKAKELGFQITNVPVYSPNAIAEHAAIQAARVLRQDKRMDEKMAKRDLRWAPTIGREVRDQVVGVVGTGHIGQVFMRIMEGFGAKVIAYDIFKNPELEKKGYYVDSLDDLYKQADVISLHVPDVPANVHMINDKSIAEMKDGVVIVNCSRGRLVDTDAVIRGLDSGKIFGFVMDTYEDEVGVFNKDWEGKEFPDKRLADLIDRPNVLVTPHTAFYTTHAVRNMVVKAFNNNLKLINGEKPDSPVALNKNKF</sequence>
<feature type="initiator methionine" description="Removed" evidence="2">
    <location>
        <position position="1"/>
    </location>
</feature>
<feature type="chain" id="PRO_0000075954" description="D-lactate dehydrogenase">
    <location>
        <begin position="2"/>
        <end position="337"/>
    </location>
</feature>
<feature type="active site" evidence="1">
    <location>
        <position position="236"/>
    </location>
</feature>
<feature type="active site" evidence="1">
    <location>
        <position position="265"/>
    </location>
</feature>
<feature type="active site" description="Proton donor" evidence="1">
    <location>
        <position position="297"/>
    </location>
</feature>
<feature type="binding site" evidence="5">
    <location>
        <begin position="156"/>
        <end position="157"/>
    </location>
    <ligand>
        <name>NAD(+)</name>
        <dbReference type="ChEBI" id="CHEBI:57540"/>
    </ligand>
</feature>
<feature type="binding site" evidence="3">
    <location>
        <position position="176"/>
    </location>
    <ligand>
        <name>NAD(+)</name>
        <dbReference type="ChEBI" id="CHEBI:57540"/>
    </ligand>
</feature>
<feature type="binding site" evidence="3">
    <location>
        <begin position="207"/>
        <end position="208"/>
    </location>
    <ligand>
        <name>NAD(+)</name>
        <dbReference type="ChEBI" id="CHEBI:57540"/>
    </ligand>
</feature>
<feature type="binding site" evidence="3">
    <location>
        <position position="213"/>
    </location>
    <ligand>
        <name>NAD(+)</name>
        <dbReference type="ChEBI" id="CHEBI:57540"/>
    </ligand>
</feature>
<feature type="binding site" evidence="5">
    <location>
        <begin position="234"/>
        <end position="236"/>
    </location>
    <ligand>
        <name>NAD(+)</name>
        <dbReference type="ChEBI" id="CHEBI:57540"/>
    </ligand>
</feature>
<feature type="binding site" evidence="3">
    <location>
        <position position="260"/>
    </location>
    <ligand>
        <name>NAD(+)</name>
        <dbReference type="ChEBI" id="CHEBI:57540"/>
    </ligand>
</feature>
<feature type="strand" evidence="6">
    <location>
        <begin position="3"/>
        <end position="8"/>
    </location>
</feature>
<feature type="turn" evidence="6">
    <location>
        <begin position="11"/>
        <end position="13"/>
    </location>
</feature>
<feature type="helix" evidence="6">
    <location>
        <begin position="14"/>
        <end position="23"/>
    </location>
</feature>
<feature type="strand" evidence="6">
    <location>
        <begin position="28"/>
        <end position="30"/>
    </location>
</feature>
<feature type="helix" evidence="6">
    <location>
        <begin position="40"/>
        <end position="43"/>
    </location>
</feature>
<feature type="strand" evidence="6">
    <location>
        <begin position="48"/>
        <end position="52"/>
    </location>
</feature>
<feature type="helix" evidence="6">
    <location>
        <begin position="60"/>
        <end position="67"/>
    </location>
</feature>
<feature type="turn" evidence="6">
    <location>
        <begin position="68"/>
        <end position="70"/>
    </location>
</feature>
<feature type="strand" evidence="6">
    <location>
        <begin position="73"/>
        <end position="75"/>
    </location>
</feature>
<feature type="strand" evidence="6">
    <location>
        <begin position="77"/>
        <end position="79"/>
    </location>
</feature>
<feature type="helix" evidence="6">
    <location>
        <begin position="86"/>
        <end position="91"/>
    </location>
</feature>
<feature type="helix" evidence="6">
    <location>
        <begin position="104"/>
        <end position="120"/>
    </location>
</feature>
<feature type="helix" evidence="6">
    <location>
        <begin position="122"/>
        <end position="130"/>
    </location>
</feature>
<feature type="helix" evidence="6">
    <location>
        <begin position="144"/>
        <end position="146"/>
    </location>
</feature>
<feature type="strand" evidence="6">
    <location>
        <begin position="147"/>
        <end position="152"/>
    </location>
</feature>
<feature type="helix" evidence="6">
    <location>
        <begin position="156"/>
        <end position="167"/>
    </location>
</feature>
<feature type="strand" evidence="6">
    <location>
        <begin position="171"/>
        <end position="175"/>
    </location>
</feature>
<feature type="helix" evidence="6">
    <location>
        <begin position="183"/>
        <end position="186"/>
    </location>
</feature>
<feature type="helix" evidence="6">
    <location>
        <begin position="193"/>
        <end position="196"/>
    </location>
</feature>
<feature type="turn" evidence="6">
    <location>
        <begin position="197"/>
        <end position="199"/>
    </location>
</feature>
<feature type="strand" evidence="6">
    <location>
        <begin position="201"/>
        <end position="205"/>
    </location>
</feature>
<feature type="turn" evidence="6">
    <location>
        <begin position="211"/>
        <end position="215"/>
    </location>
</feature>
<feature type="helix" evidence="6">
    <location>
        <begin position="219"/>
        <end position="222"/>
    </location>
</feature>
<feature type="strand" evidence="6">
    <location>
        <begin position="229"/>
        <end position="233"/>
    </location>
</feature>
<feature type="helix" evidence="6">
    <location>
        <begin position="237"/>
        <end position="239"/>
    </location>
</feature>
<feature type="helix" evidence="6">
    <location>
        <begin position="242"/>
        <end position="250"/>
    </location>
</feature>
<feature type="strand" evidence="6">
    <location>
        <begin position="253"/>
        <end position="260"/>
    </location>
</feature>
<feature type="helix" evidence="6">
    <location>
        <begin position="265"/>
        <end position="268"/>
    </location>
</feature>
<feature type="helix" evidence="6">
    <location>
        <begin position="281"/>
        <end position="288"/>
    </location>
</feature>
<feature type="strand" evidence="6">
    <location>
        <begin position="292"/>
        <end position="294"/>
    </location>
</feature>
<feature type="helix" evidence="6">
    <location>
        <begin position="303"/>
        <end position="322"/>
    </location>
</feature>
<feature type="strand" evidence="6">
    <location>
        <begin position="327"/>
        <end position="329"/>
    </location>
</feature>
<feature type="turn" evidence="6">
    <location>
        <begin position="333"/>
        <end position="335"/>
    </location>
</feature>
<name>LDHD_LACHE</name>